<reference key="1">
    <citation type="journal article" date="1991" name="Biochem. Biophys. Res. Commun.">
        <title>Molecular cloning of human XPAC gene homologs from chicken, Xenopus laevis and Drosophila melanogaster.</title>
        <authorList>
            <person name="Shimamoto T."/>
            <person name="Kohno K."/>
            <person name="Tanaka K."/>
            <person name="Okada Y."/>
        </authorList>
    </citation>
    <scope>NUCLEOTIDE SEQUENCE [MRNA]</scope>
</reference>
<dbReference type="EMBL" id="D31896">
    <property type="protein sequence ID" value="BAA06694.1"/>
    <property type="molecule type" value="mRNA"/>
</dbReference>
<dbReference type="PIR" id="JQ1323">
    <property type="entry name" value="JQ1323"/>
</dbReference>
<dbReference type="SMR" id="P27089"/>
<dbReference type="FunCoup" id="P27089">
    <property type="interactions" value="1216"/>
</dbReference>
<dbReference type="STRING" id="9031.ENSGALP00000042402"/>
<dbReference type="PaxDb" id="9031-ENSGALP00000042402"/>
<dbReference type="VEuPathDB" id="HostDB:geneid_395659"/>
<dbReference type="eggNOG" id="KOG4017">
    <property type="taxonomic scope" value="Eukaryota"/>
</dbReference>
<dbReference type="InParanoid" id="P27089"/>
<dbReference type="OrthoDB" id="68328at2759"/>
<dbReference type="PhylomeDB" id="P27089"/>
<dbReference type="Reactome" id="R-GGA-353303">
    <property type="pathway name" value="Nucleotide Excision Repair"/>
</dbReference>
<dbReference type="Proteomes" id="UP000000539">
    <property type="component" value="Unassembled WGS sequence"/>
</dbReference>
<dbReference type="GO" id="GO:0005654">
    <property type="term" value="C:nucleoplasm"/>
    <property type="evidence" value="ECO:0000304"/>
    <property type="project" value="Reactome"/>
</dbReference>
<dbReference type="GO" id="GO:0000110">
    <property type="term" value="C:nucleotide-excision repair factor 1 complex"/>
    <property type="evidence" value="ECO:0000318"/>
    <property type="project" value="GO_Central"/>
</dbReference>
<dbReference type="GO" id="GO:0003684">
    <property type="term" value="F:damaged DNA binding"/>
    <property type="evidence" value="ECO:0000318"/>
    <property type="project" value="GO_Central"/>
</dbReference>
<dbReference type="GO" id="GO:0008270">
    <property type="term" value="F:zinc ion binding"/>
    <property type="evidence" value="ECO:0007669"/>
    <property type="project" value="UniProtKB-KW"/>
</dbReference>
<dbReference type="GO" id="GO:0006284">
    <property type="term" value="P:base-excision repair"/>
    <property type="evidence" value="ECO:0000318"/>
    <property type="project" value="GO_Central"/>
</dbReference>
<dbReference type="GO" id="GO:1901255">
    <property type="term" value="P:nucleotide-excision repair involved in interstrand cross-link repair"/>
    <property type="evidence" value="ECO:0000318"/>
    <property type="project" value="GO_Central"/>
</dbReference>
<dbReference type="GO" id="GO:0000715">
    <property type="term" value="P:nucleotide-excision repair, DNA damage recognition"/>
    <property type="evidence" value="ECO:0000318"/>
    <property type="project" value="GO_Central"/>
</dbReference>
<dbReference type="GO" id="GO:0070914">
    <property type="term" value="P:UV-damage excision repair"/>
    <property type="evidence" value="ECO:0000318"/>
    <property type="project" value="GO_Central"/>
</dbReference>
<dbReference type="CDD" id="cd21076">
    <property type="entry name" value="DBD_XPA"/>
    <property type="match status" value="1"/>
</dbReference>
<dbReference type="FunFam" id="3.90.530.10:FF:000001">
    <property type="entry name" value="DNA repair protein complementing XP-A cells"/>
    <property type="match status" value="1"/>
</dbReference>
<dbReference type="Gene3D" id="3.90.530.10">
    <property type="entry name" value="XPA C-terminal domain"/>
    <property type="match status" value="1"/>
</dbReference>
<dbReference type="InterPro" id="IPR009061">
    <property type="entry name" value="DNA-bd_dom_put_sf"/>
</dbReference>
<dbReference type="InterPro" id="IPR000465">
    <property type="entry name" value="XPA/RAD14"/>
</dbReference>
<dbReference type="InterPro" id="IPR022656">
    <property type="entry name" value="XPA_C"/>
</dbReference>
<dbReference type="InterPro" id="IPR022658">
    <property type="entry name" value="XPA_CS"/>
</dbReference>
<dbReference type="InterPro" id="IPR037129">
    <property type="entry name" value="XPA_sf"/>
</dbReference>
<dbReference type="InterPro" id="IPR022652">
    <property type="entry name" value="Znf_XPA_CS"/>
</dbReference>
<dbReference type="NCBIfam" id="TIGR00598">
    <property type="entry name" value="rad14"/>
    <property type="match status" value="1"/>
</dbReference>
<dbReference type="PANTHER" id="PTHR10142">
    <property type="entry name" value="DNA REPAIR PROTEIN COMPLEMENTING XP-A CELLS"/>
    <property type="match status" value="1"/>
</dbReference>
<dbReference type="PANTHER" id="PTHR10142:SF0">
    <property type="entry name" value="DNA REPAIR PROTEIN COMPLEMENTING XP-A CELLS"/>
    <property type="match status" value="1"/>
</dbReference>
<dbReference type="Pfam" id="PF05181">
    <property type="entry name" value="XPA_C"/>
    <property type="match status" value="1"/>
</dbReference>
<dbReference type="Pfam" id="PF01286">
    <property type="entry name" value="XPA_N"/>
    <property type="match status" value="1"/>
</dbReference>
<dbReference type="SUPFAM" id="SSF57716">
    <property type="entry name" value="Glucocorticoid receptor-like (DNA-binding domain)"/>
    <property type="match status" value="1"/>
</dbReference>
<dbReference type="SUPFAM" id="SSF46955">
    <property type="entry name" value="Putative DNA-binding domain"/>
    <property type="match status" value="1"/>
</dbReference>
<dbReference type="PROSITE" id="PS00752">
    <property type="entry name" value="XPA_1"/>
    <property type="match status" value="1"/>
</dbReference>
<dbReference type="PROSITE" id="PS00753">
    <property type="entry name" value="XPA_2"/>
    <property type="match status" value="1"/>
</dbReference>
<name>XPA_CHICK</name>
<keyword id="KW-0227">DNA damage</keyword>
<keyword id="KW-0234">DNA repair</keyword>
<keyword id="KW-0238">DNA-binding</keyword>
<keyword id="KW-0479">Metal-binding</keyword>
<keyword id="KW-0539">Nucleus</keyword>
<keyword id="KW-1185">Reference proteome</keyword>
<keyword id="KW-0862">Zinc</keyword>
<keyword id="KW-0863">Zinc-finger</keyword>
<evidence type="ECO:0000250" key="1"/>
<evidence type="ECO:0000250" key="2">
    <source>
        <dbReference type="UniProtKB" id="P23025"/>
    </source>
</evidence>
<evidence type="ECO:0000255" key="3"/>
<evidence type="ECO:0000256" key="4">
    <source>
        <dbReference type="SAM" id="MobiDB-lite"/>
    </source>
</evidence>
<evidence type="ECO:0000305" key="5"/>
<gene>
    <name type="primary">XPA</name>
    <name type="synonym">XPAC</name>
</gene>
<organism>
    <name type="scientific">Gallus gallus</name>
    <name type="common">Chicken</name>
    <dbReference type="NCBI Taxonomy" id="9031"/>
    <lineage>
        <taxon>Eukaryota</taxon>
        <taxon>Metazoa</taxon>
        <taxon>Chordata</taxon>
        <taxon>Craniata</taxon>
        <taxon>Vertebrata</taxon>
        <taxon>Euteleostomi</taxon>
        <taxon>Archelosauria</taxon>
        <taxon>Archosauria</taxon>
        <taxon>Dinosauria</taxon>
        <taxon>Saurischia</taxon>
        <taxon>Theropoda</taxon>
        <taxon>Coelurosauria</taxon>
        <taxon>Aves</taxon>
        <taxon>Neognathae</taxon>
        <taxon>Galloanserae</taxon>
        <taxon>Galliformes</taxon>
        <taxon>Phasianidae</taxon>
        <taxon>Phasianinae</taxon>
        <taxon>Gallus</taxon>
    </lineage>
</organism>
<sequence length="267" mass="30978">MGRAAPGPDEGAEGERPSISATALARMERNRRRALALRQARLAARPYPQAAAGAGPPQGRDTGGGFFLEEEEEEEEQRRAAERIVHPPAPVLQFDYLICGDCGKEFMDSYLMQHFDWATCDNCRDAEDKHKLITRTEAKEEYLLKDCDLDKREPVLRFIVKKNPHNPRWGDMKLYLKLQVIKRALEVWGNEESLQEAKEQRRDSREKMKQKRFDKKVKELRRAVRSSLWKKTASIHEHEYGPEENVDEETYKKTCTVCGHELTYEKM</sequence>
<feature type="chain" id="PRO_0000208650" description="DNA repair protein complementing XP-A cells homolog">
    <location>
        <begin position="1"/>
        <end position="267"/>
    </location>
</feature>
<feature type="zinc finger region">
    <location>
        <begin position="99"/>
        <end position="123"/>
    </location>
</feature>
<feature type="region of interest" description="Disordered" evidence="4">
    <location>
        <begin position="1"/>
        <end position="21"/>
    </location>
</feature>
<feature type="region of interest" description="Disordered" evidence="4">
    <location>
        <begin position="46"/>
        <end position="65"/>
    </location>
</feature>
<feature type="short sequence motif" description="Nuclear localization signal" evidence="3">
    <location>
        <begin position="25"/>
        <end position="46"/>
    </location>
</feature>
<feature type="compositionally biased region" description="Low complexity" evidence="4">
    <location>
        <begin position="46"/>
        <end position="60"/>
    </location>
</feature>
<feature type="binding site" evidence="2">
    <location>
        <position position="99"/>
    </location>
    <ligand>
        <name>Zn(2+)</name>
        <dbReference type="ChEBI" id="CHEBI:29105"/>
    </ligand>
</feature>
<feature type="binding site" evidence="2">
    <location>
        <position position="102"/>
    </location>
    <ligand>
        <name>Zn(2+)</name>
        <dbReference type="ChEBI" id="CHEBI:29105"/>
    </ligand>
</feature>
<feature type="binding site" evidence="2">
    <location>
        <position position="120"/>
    </location>
    <ligand>
        <name>Zn(2+)</name>
        <dbReference type="ChEBI" id="CHEBI:29105"/>
    </ligand>
</feature>
<feature type="binding site" evidence="2">
    <location>
        <position position="123"/>
    </location>
    <ligand>
        <name>Zn(2+)</name>
        <dbReference type="ChEBI" id="CHEBI:29105"/>
    </ligand>
</feature>
<accession>P27089</accession>
<proteinExistence type="evidence at transcript level"/>
<protein>
    <recommendedName>
        <fullName>DNA repair protein complementing XP-A cells homolog</fullName>
    </recommendedName>
    <alternativeName>
        <fullName>Xeroderma pigmentosum group A-complementing protein homolog</fullName>
    </alternativeName>
</protein>
<comment type="function">
    <text evidence="1">Involved in DNA excision repair. Initiates repair by binding to damaged sites with various affinities, depending on the photoproduct and the transcriptional state of the region (By similarity).</text>
</comment>
<comment type="subcellular location">
    <subcellularLocation>
        <location>Nucleus</location>
    </subcellularLocation>
</comment>
<comment type="similarity">
    <text evidence="5">Belongs to the XPA family.</text>
</comment>